<accession>Q8K9B7</accession>
<reference key="1">
    <citation type="journal article" date="2002" name="Science">
        <title>50 million years of genomic stasis in endosymbiotic bacteria.</title>
        <authorList>
            <person name="Tamas I."/>
            <person name="Klasson L."/>
            <person name="Canbaeck B."/>
            <person name="Naeslund A.K."/>
            <person name="Eriksson A.-S."/>
            <person name="Wernegreen J.J."/>
            <person name="Sandstroem J.P."/>
            <person name="Moran N.A."/>
            <person name="Andersson S.G.E."/>
        </authorList>
    </citation>
    <scope>NUCLEOTIDE SEQUENCE [LARGE SCALE GENOMIC DNA]</scope>
    <source>
        <strain>Sg</strain>
    </source>
</reference>
<keyword id="KW-0067">ATP-binding</keyword>
<keyword id="KW-0520">NAD</keyword>
<keyword id="KW-0547">Nucleotide-binding</keyword>
<keyword id="KW-0548">Nucleotidyltransferase</keyword>
<keyword id="KW-0662">Pyridine nucleotide biosynthesis</keyword>
<keyword id="KW-0808">Transferase</keyword>
<dbReference type="EC" id="2.7.7.18" evidence="1"/>
<dbReference type="EMBL" id="AE013218">
    <property type="protein sequence ID" value="AAM67974.1"/>
    <property type="molecule type" value="Genomic_DNA"/>
</dbReference>
<dbReference type="RefSeq" id="WP_011053941.1">
    <property type="nucleotide sequence ID" value="NC_004061.1"/>
</dbReference>
<dbReference type="SMR" id="Q8K9B7"/>
<dbReference type="STRING" id="198804.BUsg_431"/>
<dbReference type="GeneID" id="93003903"/>
<dbReference type="KEGG" id="bas:BUsg_431"/>
<dbReference type="eggNOG" id="COG1057">
    <property type="taxonomic scope" value="Bacteria"/>
</dbReference>
<dbReference type="HOGENOM" id="CLU_069765_0_0_6"/>
<dbReference type="UniPathway" id="UPA00253">
    <property type="reaction ID" value="UER00332"/>
</dbReference>
<dbReference type="Proteomes" id="UP000000416">
    <property type="component" value="Chromosome"/>
</dbReference>
<dbReference type="GO" id="GO:0005524">
    <property type="term" value="F:ATP binding"/>
    <property type="evidence" value="ECO:0007669"/>
    <property type="project" value="UniProtKB-KW"/>
</dbReference>
<dbReference type="GO" id="GO:0004515">
    <property type="term" value="F:nicotinate-nucleotide adenylyltransferase activity"/>
    <property type="evidence" value="ECO:0007669"/>
    <property type="project" value="UniProtKB-UniRule"/>
</dbReference>
<dbReference type="GO" id="GO:0009435">
    <property type="term" value="P:NAD biosynthetic process"/>
    <property type="evidence" value="ECO:0007669"/>
    <property type="project" value="UniProtKB-UniRule"/>
</dbReference>
<dbReference type="CDD" id="cd02165">
    <property type="entry name" value="NMNAT"/>
    <property type="match status" value="1"/>
</dbReference>
<dbReference type="Gene3D" id="3.40.50.620">
    <property type="entry name" value="HUPs"/>
    <property type="match status" value="1"/>
</dbReference>
<dbReference type="HAMAP" id="MF_00244">
    <property type="entry name" value="NaMN_adenylyltr"/>
    <property type="match status" value="1"/>
</dbReference>
<dbReference type="InterPro" id="IPR004821">
    <property type="entry name" value="Cyt_trans-like"/>
</dbReference>
<dbReference type="InterPro" id="IPR005248">
    <property type="entry name" value="NadD/NMNAT"/>
</dbReference>
<dbReference type="InterPro" id="IPR014729">
    <property type="entry name" value="Rossmann-like_a/b/a_fold"/>
</dbReference>
<dbReference type="NCBIfam" id="TIGR00125">
    <property type="entry name" value="cyt_tran_rel"/>
    <property type="match status" value="1"/>
</dbReference>
<dbReference type="NCBIfam" id="TIGR00482">
    <property type="entry name" value="nicotinate (nicotinamide) nucleotide adenylyltransferase"/>
    <property type="match status" value="1"/>
</dbReference>
<dbReference type="NCBIfam" id="NF000839">
    <property type="entry name" value="PRK00071.1-1"/>
    <property type="match status" value="1"/>
</dbReference>
<dbReference type="PANTHER" id="PTHR39321">
    <property type="entry name" value="NICOTINATE-NUCLEOTIDE ADENYLYLTRANSFERASE-RELATED"/>
    <property type="match status" value="1"/>
</dbReference>
<dbReference type="PANTHER" id="PTHR39321:SF3">
    <property type="entry name" value="PHOSPHOPANTETHEINE ADENYLYLTRANSFERASE"/>
    <property type="match status" value="1"/>
</dbReference>
<dbReference type="Pfam" id="PF01467">
    <property type="entry name" value="CTP_transf_like"/>
    <property type="match status" value="1"/>
</dbReference>
<dbReference type="SUPFAM" id="SSF52374">
    <property type="entry name" value="Nucleotidylyl transferase"/>
    <property type="match status" value="1"/>
</dbReference>
<comment type="function">
    <text evidence="1">Catalyzes the reversible adenylation of nicotinate mononucleotide (NaMN) to nicotinic acid adenine dinucleotide (NaAD).</text>
</comment>
<comment type="catalytic activity">
    <reaction evidence="1">
        <text>nicotinate beta-D-ribonucleotide + ATP + H(+) = deamido-NAD(+) + diphosphate</text>
        <dbReference type="Rhea" id="RHEA:22860"/>
        <dbReference type="ChEBI" id="CHEBI:15378"/>
        <dbReference type="ChEBI" id="CHEBI:30616"/>
        <dbReference type="ChEBI" id="CHEBI:33019"/>
        <dbReference type="ChEBI" id="CHEBI:57502"/>
        <dbReference type="ChEBI" id="CHEBI:58437"/>
        <dbReference type="EC" id="2.7.7.18"/>
    </reaction>
</comment>
<comment type="pathway">
    <text evidence="1">Cofactor biosynthesis; NAD(+) biosynthesis; deamido-NAD(+) from nicotinate D-ribonucleotide: step 1/1.</text>
</comment>
<comment type="similarity">
    <text evidence="1">Belongs to the NadD family.</text>
</comment>
<organism>
    <name type="scientific">Buchnera aphidicola subsp. Schizaphis graminum (strain Sg)</name>
    <dbReference type="NCBI Taxonomy" id="198804"/>
    <lineage>
        <taxon>Bacteria</taxon>
        <taxon>Pseudomonadati</taxon>
        <taxon>Pseudomonadota</taxon>
        <taxon>Gammaproteobacteria</taxon>
        <taxon>Enterobacterales</taxon>
        <taxon>Erwiniaceae</taxon>
        <taxon>Buchnera</taxon>
    </lineage>
</organism>
<proteinExistence type="inferred from homology"/>
<gene>
    <name evidence="1" type="primary">nadD</name>
    <name type="ordered locus">BUsg_431</name>
</gene>
<protein>
    <recommendedName>
        <fullName evidence="1">Probable nicotinate-nucleotide adenylyltransferase</fullName>
        <ecNumber evidence="1">2.7.7.18</ecNumber>
    </recommendedName>
    <alternativeName>
        <fullName evidence="1">Deamido-NAD(+) diphosphorylase</fullName>
    </alternativeName>
    <alternativeName>
        <fullName evidence="1">Deamido-NAD(+) pyrophosphorylase</fullName>
    </alternativeName>
    <alternativeName>
        <fullName evidence="1">Nicotinate mononucleotide adenylyltransferase</fullName>
        <shortName evidence="1">NaMN adenylyltransferase</shortName>
    </alternativeName>
</protein>
<name>NADD_BUCAP</name>
<evidence type="ECO:0000255" key="1">
    <source>
        <dbReference type="HAMAP-Rule" id="MF_00244"/>
    </source>
</evidence>
<feature type="chain" id="PRO_0000181399" description="Probable nicotinate-nucleotide adenylyltransferase">
    <location>
        <begin position="1"/>
        <end position="216"/>
    </location>
</feature>
<sequence length="216" mass="25218">MKEIYAIFGGNFDPIHYGHITSAEKLSREISIKKIILLPNYGPPHRSKTKTSIIDRLKMIKFAIKDNKLFTISYLETKKNTTFYTIETLKKIRKKIGYLQPLCFIIGEDNLNNLNIWKDWKKILSLSHLLICPRIHIKKSNPKLKKWISDHTTKNSNLLHKKPFGFIFFSKMSMLNISSTAIRKSYYEGKSACGLLPSKIDKYILSKNLYKIYNQN</sequence>